<comment type="function">
    <text>Actins are highly conserved proteins that are involved in various types of cell motility and are ubiquitously expressed in all eukaryotic cells.</text>
</comment>
<comment type="catalytic activity">
    <reaction evidence="2">
        <text>ATP + H2O = ADP + phosphate + H(+)</text>
        <dbReference type="Rhea" id="RHEA:13065"/>
        <dbReference type="ChEBI" id="CHEBI:15377"/>
        <dbReference type="ChEBI" id="CHEBI:15378"/>
        <dbReference type="ChEBI" id="CHEBI:30616"/>
        <dbReference type="ChEBI" id="CHEBI:43474"/>
        <dbReference type="ChEBI" id="CHEBI:456216"/>
    </reaction>
</comment>
<comment type="subcellular location">
    <subcellularLocation>
        <location>Cytoplasm</location>
        <location>Cytoskeleton</location>
    </subcellularLocation>
</comment>
<comment type="similarity">
    <text evidence="3">Belongs to the actin family.</text>
</comment>
<evidence type="ECO:0000250" key="1"/>
<evidence type="ECO:0000250" key="2">
    <source>
        <dbReference type="UniProtKB" id="P68137"/>
    </source>
</evidence>
<evidence type="ECO:0000305" key="3"/>
<dbReference type="EC" id="3.6.4.-" evidence="2"/>
<dbReference type="EMBL" id="M84916">
    <property type="protein sequence ID" value="AAA29409.1"/>
    <property type="molecule type" value="Genomic_DNA"/>
</dbReference>
<dbReference type="PIR" id="A48449">
    <property type="entry name" value="A48449"/>
</dbReference>
<dbReference type="SMR" id="P30162"/>
<dbReference type="STRING" id="6282.P30162"/>
<dbReference type="HOGENOM" id="CLU_027965_0_2_1"/>
<dbReference type="Proteomes" id="UP000024404">
    <property type="component" value="Unassembled WGS sequence"/>
</dbReference>
<dbReference type="GO" id="GO:0005737">
    <property type="term" value="C:cytoplasm"/>
    <property type="evidence" value="ECO:0007669"/>
    <property type="project" value="UniProtKB-KW"/>
</dbReference>
<dbReference type="GO" id="GO:0005856">
    <property type="term" value="C:cytoskeleton"/>
    <property type="evidence" value="ECO:0007669"/>
    <property type="project" value="UniProtKB-SubCell"/>
</dbReference>
<dbReference type="GO" id="GO:0005524">
    <property type="term" value="F:ATP binding"/>
    <property type="evidence" value="ECO:0007669"/>
    <property type="project" value="UniProtKB-KW"/>
</dbReference>
<dbReference type="GO" id="GO:0016787">
    <property type="term" value="F:hydrolase activity"/>
    <property type="evidence" value="ECO:0007669"/>
    <property type="project" value="UniProtKB-KW"/>
</dbReference>
<dbReference type="CDD" id="cd10224">
    <property type="entry name" value="ASKHA_NBD_actin"/>
    <property type="match status" value="1"/>
</dbReference>
<dbReference type="FunFam" id="3.30.420.40:FF:000131">
    <property type="entry name" value="Actin, alpha skeletal muscle"/>
    <property type="match status" value="1"/>
</dbReference>
<dbReference type="FunFam" id="3.30.420.40:FF:000291">
    <property type="entry name" value="Actin, alpha skeletal muscle"/>
    <property type="match status" value="1"/>
</dbReference>
<dbReference type="FunFam" id="3.90.640.10:FF:000047">
    <property type="entry name" value="Actin, alpha skeletal muscle"/>
    <property type="match status" value="1"/>
</dbReference>
<dbReference type="FunFam" id="3.30.420.40:FF:000058">
    <property type="entry name" value="Putative actin-related protein 5"/>
    <property type="match status" value="1"/>
</dbReference>
<dbReference type="Gene3D" id="3.30.420.40">
    <property type="match status" value="2"/>
</dbReference>
<dbReference type="Gene3D" id="3.90.640.10">
    <property type="entry name" value="Actin, Chain A, domain 4"/>
    <property type="match status" value="1"/>
</dbReference>
<dbReference type="InterPro" id="IPR004000">
    <property type="entry name" value="Actin"/>
</dbReference>
<dbReference type="InterPro" id="IPR020902">
    <property type="entry name" value="Actin/actin-like_CS"/>
</dbReference>
<dbReference type="InterPro" id="IPR004001">
    <property type="entry name" value="Actin_CS"/>
</dbReference>
<dbReference type="InterPro" id="IPR043129">
    <property type="entry name" value="ATPase_NBD"/>
</dbReference>
<dbReference type="PANTHER" id="PTHR11937">
    <property type="entry name" value="ACTIN"/>
    <property type="match status" value="1"/>
</dbReference>
<dbReference type="Pfam" id="PF00022">
    <property type="entry name" value="Actin"/>
    <property type="match status" value="1"/>
</dbReference>
<dbReference type="PRINTS" id="PR00190">
    <property type="entry name" value="ACTIN"/>
</dbReference>
<dbReference type="SMART" id="SM00268">
    <property type="entry name" value="ACTIN"/>
    <property type="match status" value="1"/>
</dbReference>
<dbReference type="SUPFAM" id="SSF53067">
    <property type="entry name" value="Actin-like ATPase domain"/>
    <property type="match status" value="2"/>
</dbReference>
<dbReference type="PROSITE" id="PS00406">
    <property type="entry name" value="ACTINS_1"/>
    <property type="match status" value="1"/>
</dbReference>
<dbReference type="PROSITE" id="PS00432">
    <property type="entry name" value="ACTINS_2"/>
    <property type="match status" value="1"/>
</dbReference>
<dbReference type="PROSITE" id="PS01132">
    <property type="entry name" value="ACTINS_ACT_LIKE"/>
    <property type="match status" value="1"/>
</dbReference>
<organism>
    <name type="scientific">Onchocerca volvulus</name>
    <dbReference type="NCBI Taxonomy" id="6282"/>
    <lineage>
        <taxon>Eukaryota</taxon>
        <taxon>Metazoa</taxon>
        <taxon>Ecdysozoa</taxon>
        <taxon>Nematoda</taxon>
        <taxon>Chromadorea</taxon>
        <taxon>Rhabditida</taxon>
        <taxon>Spirurina</taxon>
        <taxon>Spiruromorpha</taxon>
        <taxon>Filarioidea</taxon>
        <taxon>Onchocercidae</taxon>
        <taxon>Onchocerca</taxon>
    </lineage>
</organism>
<reference key="1">
    <citation type="journal article" date="1992" name="Mol. Biochem. Parasitol.">
        <title>The actin genes of Onchocerca volvulus.</title>
        <authorList>
            <person name="Zeng W."/>
            <person name="Donelson J.E."/>
        </authorList>
    </citation>
    <scope>NUCLEOTIDE SEQUENCE [GENOMIC DNA]</scope>
</reference>
<proteinExistence type="inferred from homology"/>
<sequence>MCDEEVAALVVDNGSGMCKAGFAGDDAPRAVFPSIVGRPRHQGVMVGMGQKDSYVGDEAQSKRGILTLKYPIEHGIVTNWDDMEKIWHHTFYNELRVAPEEHPVLLTEAPLNPKANREKMTQIMFETFNTPAMYVAIQAVLSLYASGRTTGIVLDSGDGVTHTVPIYEGYALPHAILRLDLAGRDLTDYLMKILTERGYSFTTTAEREIVRDIKEKLCYVALDFEQEMATAASSSSLEKSYELPDGQVITVGNERFRCPEALFQPSFLGMESAGIHESTYNSIMKCDIDIRKDLYANIVLSGGTTMYPGIADRMQKEVTALAPSTMKIKIIAPPERKYSVWIGGSILASLSTFQQVWISKQEYDESGPSIVHRKCF</sequence>
<keyword id="KW-0007">Acetylation</keyword>
<keyword id="KW-0067">ATP-binding</keyword>
<keyword id="KW-0963">Cytoplasm</keyword>
<keyword id="KW-0206">Cytoskeleton</keyword>
<keyword id="KW-0378">Hydrolase</keyword>
<keyword id="KW-0547">Nucleotide-binding</keyword>
<keyword id="KW-1185">Reference proteome</keyword>
<gene>
    <name type="primary">act-1a</name>
</gene>
<name>ACT1_ONCVO</name>
<protein>
    <recommendedName>
        <fullName>Actin-1</fullName>
        <ecNumber evidence="2">3.6.4.-</ecNumber>
    </recommendedName>
</protein>
<accession>P30162</accession>
<feature type="propeptide" id="PRO_0000000704" description="Removed in mature form" evidence="1">
    <location>
        <begin position="1"/>
        <end position="2"/>
    </location>
</feature>
<feature type="chain" id="PRO_0000000705" description="Actin-1">
    <location>
        <begin position="3"/>
        <end position="376"/>
    </location>
</feature>
<feature type="modified residue" description="N-acetylaspartate" evidence="1">
    <location>
        <position position="3"/>
    </location>
</feature>